<proteinExistence type="evidence at transcript level"/>
<evidence type="ECO:0000255" key="1"/>
<evidence type="ECO:0000269" key="2">
    <source>
    </source>
</evidence>
<evidence type="ECO:0000303" key="3">
    <source>
    </source>
</evidence>
<evidence type="ECO:0000305" key="4"/>
<evidence type="ECO:0000312" key="5">
    <source>
        <dbReference type="Araport" id="AT5G59440"/>
    </source>
</evidence>
<protein>
    <recommendedName>
        <fullName evidence="4">Thymidylate kinase</fullName>
        <shortName evidence="3">AtTMPK</shortName>
        <ecNumber evidence="4">2.7.4.9</ecNumber>
    </recommendedName>
    <alternativeName>
        <fullName evidence="3">Protein ZEUS1</fullName>
    </alternativeName>
</protein>
<gene>
    <name evidence="3" type="primary">ZEU1</name>
    <name evidence="5" type="ordered locus">At5g59440</name>
</gene>
<accession>Q0WW55</accession>
<accession>A0NAB2</accession>
<accession>A2P2R9</accession>
<accession>Q8LEB4</accession>
<accession>Q93ZP0</accession>
<dbReference type="EC" id="2.7.4.9" evidence="4"/>
<dbReference type="EMBL" id="AB025604">
    <property type="status" value="NOT_ANNOTATED_CDS"/>
    <property type="molecule type" value="Genomic_DNA"/>
</dbReference>
<dbReference type="EMBL" id="CP002688">
    <property type="protein sequence ID" value="AED97188.1"/>
    <property type="molecule type" value="Genomic_DNA"/>
</dbReference>
<dbReference type="EMBL" id="CP002688">
    <property type="protein sequence ID" value="AED97189.1"/>
    <property type="molecule type" value="Genomic_DNA"/>
</dbReference>
<dbReference type="EMBL" id="AY056422">
    <property type="protein sequence ID" value="AAL08278.1"/>
    <property type="molecule type" value="mRNA"/>
</dbReference>
<dbReference type="EMBL" id="AY081713">
    <property type="protein sequence ID" value="AAL87366.1"/>
    <property type="molecule type" value="mRNA"/>
</dbReference>
<dbReference type="EMBL" id="AK226501">
    <property type="protein sequence ID" value="BAE98643.1"/>
    <property type="molecule type" value="mRNA"/>
</dbReference>
<dbReference type="EMBL" id="AY085520">
    <property type="protein sequence ID" value="AAM62744.1"/>
    <property type="molecule type" value="mRNA"/>
</dbReference>
<dbReference type="RefSeq" id="NP_568907.2">
    <molecule id="Q0WW55-2"/>
    <property type="nucleotide sequence ID" value="NM_125335.4"/>
</dbReference>
<dbReference type="RefSeq" id="NP_851222.1">
    <molecule id="Q0WW55-1"/>
    <property type="nucleotide sequence ID" value="NM_180891.4"/>
</dbReference>
<dbReference type="SMR" id="Q0WW55"/>
<dbReference type="FunCoup" id="Q0WW55">
    <property type="interactions" value="3217"/>
</dbReference>
<dbReference type="STRING" id="3702.Q0WW55"/>
<dbReference type="iPTMnet" id="Q0WW55"/>
<dbReference type="PaxDb" id="3702-AT5G59440.3"/>
<dbReference type="ProteomicsDB" id="232318">
    <molecule id="Q0WW55-1"/>
</dbReference>
<dbReference type="EnsemblPlants" id="AT5G59440.1">
    <molecule id="Q0WW55-1"/>
    <property type="protein sequence ID" value="AT5G59440.1"/>
    <property type="gene ID" value="AT5G59440"/>
</dbReference>
<dbReference type="EnsemblPlants" id="AT5G59440.2">
    <molecule id="Q0WW55-2"/>
    <property type="protein sequence ID" value="AT5G59440.2"/>
    <property type="gene ID" value="AT5G59440"/>
</dbReference>
<dbReference type="GeneID" id="836063"/>
<dbReference type="Gramene" id="AT5G59440.1">
    <molecule id="Q0WW55-1"/>
    <property type="protein sequence ID" value="AT5G59440.1"/>
    <property type="gene ID" value="AT5G59440"/>
</dbReference>
<dbReference type="Gramene" id="AT5G59440.2">
    <molecule id="Q0WW55-2"/>
    <property type="protein sequence ID" value="AT5G59440.2"/>
    <property type="gene ID" value="AT5G59440"/>
</dbReference>
<dbReference type="KEGG" id="ath:AT5G59440"/>
<dbReference type="Araport" id="AT5G59440"/>
<dbReference type="TAIR" id="AT5G59440">
    <property type="gene designation" value="ZEU1"/>
</dbReference>
<dbReference type="eggNOG" id="KOG3327">
    <property type="taxonomic scope" value="Eukaryota"/>
</dbReference>
<dbReference type="InParanoid" id="Q0WW55"/>
<dbReference type="PhylomeDB" id="Q0WW55"/>
<dbReference type="BioCyc" id="ARA:AT5G59440-MONOMER"/>
<dbReference type="BioCyc" id="MetaCyc:AT5G59440-MONOMER"/>
<dbReference type="BRENDA" id="2.7.4.9">
    <property type="organism ID" value="399"/>
</dbReference>
<dbReference type="UniPathway" id="UPA00575"/>
<dbReference type="PRO" id="PR:Q0WW55"/>
<dbReference type="Proteomes" id="UP000006548">
    <property type="component" value="Chromosome 5"/>
</dbReference>
<dbReference type="ExpressionAtlas" id="Q0WW55">
    <property type="expression patterns" value="baseline and differential"/>
</dbReference>
<dbReference type="GO" id="GO:0005737">
    <property type="term" value="C:cytoplasm"/>
    <property type="evidence" value="ECO:0000314"/>
    <property type="project" value="UniProtKB"/>
</dbReference>
<dbReference type="GO" id="GO:0005739">
    <property type="term" value="C:mitochondrion"/>
    <property type="evidence" value="ECO:0000314"/>
    <property type="project" value="UniProtKB"/>
</dbReference>
<dbReference type="GO" id="GO:0005654">
    <property type="term" value="C:nucleoplasm"/>
    <property type="evidence" value="ECO:0000314"/>
    <property type="project" value="UniProtKB"/>
</dbReference>
<dbReference type="GO" id="GO:0005524">
    <property type="term" value="F:ATP binding"/>
    <property type="evidence" value="ECO:0007669"/>
    <property type="project" value="UniProtKB-KW"/>
</dbReference>
<dbReference type="GO" id="GO:0004798">
    <property type="term" value="F:dTMP kinase activity"/>
    <property type="evidence" value="ECO:0007669"/>
    <property type="project" value="UniProtKB-EC"/>
</dbReference>
<dbReference type="GO" id="GO:0006233">
    <property type="term" value="P:dTDP biosynthetic process"/>
    <property type="evidence" value="ECO:0007669"/>
    <property type="project" value="InterPro"/>
</dbReference>
<dbReference type="GO" id="GO:0006235">
    <property type="term" value="P:dTTP biosynthetic process"/>
    <property type="evidence" value="ECO:0007669"/>
    <property type="project" value="UniProtKB-UniPathway"/>
</dbReference>
<dbReference type="GO" id="GO:0009793">
    <property type="term" value="P:embryo development ending in seed dormancy"/>
    <property type="evidence" value="ECO:0000315"/>
    <property type="project" value="UniProtKB"/>
</dbReference>
<dbReference type="CDD" id="cd01672">
    <property type="entry name" value="TMPK"/>
    <property type="match status" value="1"/>
</dbReference>
<dbReference type="FunFam" id="3.40.50.300:FF:000679">
    <property type="entry name" value="Thymidylate kinase"/>
    <property type="match status" value="1"/>
</dbReference>
<dbReference type="Gene3D" id="3.40.50.300">
    <property type="entry name" value="P-loop containing nucleotide triphosphate hydrolases"/>
    <property type="match status" value="1"/>
</dbReference>
<dbReference type="HAMAP" id="MF_00165">
    <property type="entry name" value="Thymidylate_kinase"/>
    <property type="match status" value="1"/>
</dbReference>
<dbReference type="InterPro" id="IPR027417">
    <property type="entry name" value="P-loop_NTPase"/>
</dbReference>
<dbReference type="InterPro" id="IPR039430">
    <property type="entry name" value="Thymidylate_kin-like_dom"/>
</dbReference>
<dbReference type="InterPro" id="IPR018095">
    <property type="entry name" value="Thymidylate_kin_CS"/>
</dbReference>
<dbReference type="InterPro" id="IPR018094">
    <property type="entry name" value="Thymidylate_kinase"/>
</dbReference>
<dbReference type="NCBIfam" id="TIGR00041">
    <property type="entry name" value="DTMP_kinase"/>
    <property type="match status" value="1"/>
</dbReference>
<dbReference type="PANTHER" id="PTHR10344">
    <property type="entry name" value="THYMIDYLATE KINASE"/>
    <property type="match status" value="1"/>
</dbReference>
<dbReference type="PANTHER" id="PTHR10344:SF1">
    <property type="entry name" value="THYMIDYLATE KINASE"/>
    <property type="match status" value="1"/>
</dbReference>
<dbReference type="Pfam" id="PF02223">
    <property type="entry name" value="Thymidylate_kin"/>
    <property type="match status" value="1"/>
</dbReference>
<dbReference type="SUPFAM" id="SSF52540">
    <property type="entry name" value="P-loop containing nucleoside triphosphate hydrolases"/>
    <property type="match status" value="1"/>
</dbReference>
<dbReference type="PROSITE" id="PS01331">
    <property type="entry name" value="THYMIDYLATE_KINASE"/>
    <property type="match status" value="1"/>
</dbReference>
<feature type="transit peptide" description="Mitochondrion" evidence="1">
    <location>
        <begin position="1"/>
        <end position="51"/>
    </location>
</feature>
<feature type="chain" id="PRO_0000436753" description="Thymidylate kinase">
    <location>
        <begin position="52"/>
        <end position="263"/>
    </location>
</feature>
<feature type="binding site" evidence="4">
    <location>
        <begin position="66"/>
        <end position="74"/>
    </location>
    <ligand>
        <name>ATP</name>
        <dbReference type="ChEBI" id="CHEBI:30616"/>
    </ligand>
</feature>
<feature type="splice variant" id="VSP_058414" description="In isoform 2.">
    <location>
        <begin position="1"/>
        <end position="39"/>
    </location>
</feature>
<feature type="sequence conflict" description="In Ref. 5; AAM62744." evidence="4" ref="5">
    <original>F</original>
    <variation>C</variation>
    <location>
        <position position="45"/>
    </location>
</feature>
<feature type="sequence conflict" description="In Ref. 3; AAL08278/AAL87366." evidence="4" ref="3">
    <original>D</original>
    <variation>Y</variation>
    <location>
        <position position="149"/>
    </location>
</feature>
<name>ZEUS1_ARATH</name>
<keyword id="KW-0025">Alternative splicing</keyword>
<keyword id="KW-0067">ATP-binding</keyword>
<keyword id="KW-0963">Cytoplasm</keyword>
<keyword id="KW-0418">Kinase</keyword>
<keyword id="KW-0496">Mitochondrion</keyword>
<keyword id="KW-0545">Nucleotide biosynthesis</keyword>
<keyword id="KW-0547">Nucleotide-binding</keyword>
<keyword id="KW-0539">Nucleus</keyword>
<keyword id="KW-1185">Reference proteome</keyword>
<keyword id="KW-0808">Transferase</keyword>
<keyword id="KW-0809">Transit peptide</keyword>
<reference key="1">
    <citation type="submission" date="1999-04" db="EMBL/GenBank/DDBJ databases">
        <title>Structural analysis of Arabidopsis thaliana chromosome 5. XI.</title>
        <authorList>
            <person name="Kaneko T."/>
            <person name="Katoh T."/>
            <person name="Asamizu E."/>
            <person name="Sato S."/>
            <person name="Nakamura Y."/>
            <person name="Kotani H."/>
            <person name="Tabata S."/>
        </authorList>
    </citation>
    <scope>NUCLEOTIDE SEQUENCE [LARGE SCALE GENOMIC DNA]</scope>
    <source>
        <strain>cv. Columbia</strain>
    </source>
</reference>
<reference key="2">
    <citation type="journal article" date="2017" name="Plant J.">
        <title>Araport11: a complete reannotation of the Arabidopsis thaliana reference genome.</title>
        <authorList>
            <person name="Cheng C.Y."/>
            <person name="Krishnakumar V."/>
            <person name="Chan A.P."/>
            <person name="Thibaud-Nissen F."/>
            <person name="Schobel S."/>
            <person name="Town C.D."/>
        </authorList>
    </citation>
    <scope>GENOME REANNOTATION</scope>
    <source>
        <strain>cv. Columbia</strain>
    </source>
</reference>
<reference key="3">
    <citation type="journal article" date="2003" name="Science">
        <title>Empirical analysis of transcriptional activity in the Arabidopsis genome.</title>
        <authorList>
            <person name="Yamada K."/>
            <person name="Lim J."/>
            <person name="Dale J.M."/>
            <person name="Chen H."/>
            <person name="Shinn P."/>
            <person name="Palm C.J."/>
            <person name="Southwick A.M."/>
            <person name="Wu H.C."/>
            <person name="Kim C.J."/>
            <person name="Nguyen M."/>
            <person name="Pham P.K."/>
            <person name="Cheuk R.F."/>
            <person name="Karlin-Newmann G."/>
            <person name="Liu S.X."/>
            <person name="Lam B."/>
            <person name="Sakano H."/>
            <person name="Wu T."/>
            <person name="Yu G."/>
            <person name="Miranda M."/>
            <person name="Quach H.L."/>
            <person name="Tripp M."/>
            <person name="Chang C.H."/>
            <person name="Lee J.M."/>
            <person name="Toriumi M.J."/>
            <person name="Chan M.M."/>
            <person name="Tang C.C."/>
            <person name="Onodera C.S."/>
            <person name="Deng J.M."/>
            <person name="Akiyama K."/>
            <person name="Ansari Y."/>
            <person name="Arakawa T."/>
            <person name="Banh J."/>
            <person name="Banno F."/>
            <person name="Bowser L."/>
            <person name="Brooks S.Y."/>
            <person name="Carninci P."/>
            <person name="Chao Q."/>
            <person name="Choy N."/>
            <person name="Enju A."/>
            <person name="Goldsmith A.D."/>
            <person name="Gurjal M."/>
            <person name="Hansen N.F."/>
            <person name="Hayashizaki Y."/>
            <person name="Johnson-Hopson C."/>
            <person name="Hsuan V.W."/>
            <person name="Iida K."/>
            <person name="Karnes M."/>
            <person name="Khan S."/>
            <person name="Koesema E."/>
            <person name="Ishida J."/>
            <person name="Jiang P.X."/>
            <person name="Jones T."/>
            <person name="Kawai J."/>
            <person name="Kamiya A."/>
            <person name="Meyers C."/>
            <person name="Nakajima M."/>
            <person name="Narusaka M."/>
            <person name="Seki M."/>
            <person name="Sakurai T."/>
            <person name="Satou M."/>
            <person name="Tamse R."/>
            <person name="Vaysberg M."/>
            <person name="Wallender E.K."/>
            <person name="Wong C."/>
            <person name="Yamamura Y."/>
            <person name="Yuan S."/>
            <person name="Shinozaki K."/>
            <person name="Davis R.W."/>
            <person name="Theologis A."/>
            <person name="Ecker J.R."/>
        </authorList>
    </citation>
    <scope>NUCLEOTIDE SEQUENCE [LARGE SCALE MRNA] (ISOFORM 2)</scope>
    <source>
        <strain>cv. Columbia</strain>
    </source>
</reference>
<reference key="4">
    <citation type="submission" date="2006-07" db="EMBL/GenBank/DDBJ databases">
        <title>Large-scale analysis of RIKEN Arabidopsis full-length (RAFL) cDNAs.</title>
        <authorList>
            <person name="Totoki Y."/>
            <person name="Seki M."/>
            <person name="Ishida J."/>
            <person name="Nakajima M."/>
            <person name="Enju A."/>
            <person name="Kamiya A."/>
            <person name="Narusaka M."/>
            <person name="Shin-i T."/>
            <person name="Nakagawa M."/>
            <person name="Sakamoto N."/>
            <person name="Oishi K."/>
            <person name="Kohara Y."/>
            <person name="Kobayashi M."/>
            <person name="Toyoda A."/>
            <person name="Sakaki Y."/>
            <person name="Sakurai T."/>
            <person name="Iida K."/>
            <person name="Akiyama K."/>
            <person name="Satou M."/>
            <person name="Toyoda T."/>
            <person name="Konagaya A."/>
            <person name="Carninci P."/>
            <person name="Kawai J."/>
            <person name="Hayashizaki Y."/>
            <person name="Shinozaki K."/>
        </authorList>
    </citation>
    <scope>NUCLEOTIDE SEQUENCE [LARGE SCALE MRNA] (ISOFORM 1)</scope>
    <source>
        <strain>cv. Columbia</strain>
    </source>
</reference>
<reference key="5">
    <citation type="submission" date="2002-03" db="EMBL/GenBank/DDBJ databases">
        <title>Full-length cDNA from Arabidopsis thaliana.</title>
        <authorList>
            <person name="Brover V.V."/>
            <person name="Troukhan M.E."/>
            <person name="Alexandrov N.A."/>
            <person name="Lu Y.-P."/>
            <person name="Flavell R.B."/>
            <person name="Feldmann K.A."/>
        </authorList>
    </citation>
    <scope>NUCLEOTIDE SEQUENCE [LARGE SCALE MRNA] (ISOFORM 1)</scope>
</reference>
<reference key="6">
    <citation type="journal article" date="2008" name="Plant J.">
        <title>The first zygotic division in Arabidopsis requires de novo transcription of thymidylate kinase.</title>
        <authorList>
            <person name="Ronceret A."/>
            <person name="Gadea-Vacas J."/>
            <person name="Guilleminot J."/>
            <person name="Lincker F."/>
            <person name="Delorme V."/>
            <person name="Lahmy S."/>
            <person name="Pelletier G."/>
            <person name="Chaboute M.E."/>
            <person name="Devic M."/>
        </authorList>
    </citation>
    <scope>FUNCTION</scope>
    <scope>SUBCELLULAR LOCATION</scope>
    <scope>ALTERNATIVE SPLICING</scope>
    <scope>TISSUE SPECIFICITY</scope>
    <scope>INDUCTION BY CELL CYCLE</scope>
    <scope>DISRUPTION PHENOTYPE</scope>
</reference>
<organism>
    <name type="scientific">Arabidopsis thaliana</name>
    <name type="common">Mouse-ear cress</name>
    <dbReference type="NCBI Taxonomy" id="3702"/>
    <lineage>
        <taxon>Eukaryota</taxon>
        <taxon>Viridiplantae</taxon>
        <taxon>Streptophyta</taxon>
        <taxon>Embryophyta</taxon>
        <taxon>Tracheophyta</taxon>
        <taxon>Spermatophyta</taxon>
        <taxon>Magnoliopsida</taxon>
        <taxon>eudicotyledons</taxon>
        <taxon>Gunneridae</taxon>
        <taxon>Pentapetalae</taxon>
        <taxon>rosids</taxon>
        <taxon>malvids</taxon>
        <taxon>Brassicales</taxon>
        <taxon>Brassicaceae</taxon>
        <taxon>Camelineae</taxon>
        <taxon>Arabidopsis</taxon>
    </lineage>
</organism>
<comment type="function">
    <text evidence="2 4">Catalyzes the conversion of dTMP to dTDP (Probable). Involved in the regulation of DNA replication. Is essential to promote the first division of the zygote (PubMed:18036198).</text>
</comment>
<comment type="catalytic activity">
    <reaction evidence="4">
        <text>dTMP + ATP = dTDP + ADP</text>
        <dbReference type="Rhea" id="RHEA:13517"/>
        <dbReference type="ChEBI" id="CHEBI:30616"/>
        <dbReference type="ChEBI" id="CHEBI:58369"/>
        <dbReference type="ChEBI" id="CHEBI:63528"/>
        <dbReference type="ChEBI" id="CHEBI:456216"/>
        <dbReference type="EC" id="2.7.4.9"/>
    </reaction>
</comment>
<comment type="pathway">
    <text evidence="4">Pyrimidine metabolism; dTTP biosynthesis.</text>
</comment>
<comment type="subcellular location">
    <molecule>Isoform 1</molecule>
    <subcellularLocation>
        <location evidence="2">Mitochondrion</location>
    </subcellularLocation>
</comment>
<comment type="subcellular location">
    <molecule>Isoform 2</molecule>
    <subcellularLocation>
        <location evidence="2">Cytoplasm</location>
    </subcellularLocation>
    <subcellularLocation>
        <location evidence="2">Nucleus</location>
        <location evidence="2">Nucleoplasm</location>
    </subcellularLocation>
</comment>
<comment type="alternative products">
    <event type="alternative splicing"/>
    <isoform>
        <id>Q0WW55-1</id>
        <name>1</name>
        <name evidence="3">AtTMPK.1</name>
        <sequence type="displayed"/>
    </isoform>
    <isoform>
        <id>Q0WW55-2</id>
        <name>2</name>
        <name evidence="3">AtTMPK.2</name>
        <sequence type="described" ref="VSP_058414"/>
    </isoform>
</comment>
<comment type="tissue specificity">
    <text evidence="2">Expressed in root, rosette leaves, flower buds, flowers and siliques.</text>
</comment>
<comment type="induction">
    <text evidence="2">Cell cycle regulated. Up-regulated at the G1/S phase transition and then decreases rapidly as cells progress into S-phase. Not up-regulated during the male and female gametophytic mitoses.</text>
</comment>
<comment type="disruption phenotype">
    <text evidence="2">Embryonic lethality when homozygous, due to arrest of the embryo sac development soon after fertilization.</text>
</comment>
<comment type="similarity">
    <text evidence="4">Belongs to the thymidylate kinase family.</text>
</comment>
<sequence>MKRICSVSSVQLFSRSFRALASPRSLNYPLQCIKRSSVRMESSNFSSGVRTESSVKPRGALIVLEGLDRSGKSTQCAKLLSFLNGLGHPTELWRFPDRETSVGQMISAYLSNKSQLDDHTIHLLFSANRWEKRSLMEEKLKTGTTLIVDRYSYSGVAFSSAKGLDIEWCKAPEIGLLAPDSVLYLDISPERAAERGGYGDERYERVEFQKKVADFYQTLGDSSWKIINASDAMEEVEKKIQQVVLDQVKECTEGKPLSLLWSS</sequence>